<keyword id="KW-0687">Ribonucleoprotein</keyword>
<keyword id="KW-0689">Ribosomal protein</keyword>
<keyword id="KW-0694">RNA-binding</keyword>
<keyword id="KW-0699">rRNA-binding</keyword>
<keyword id="KW-0820">tRNA-binding</keyword>
<organism>
    <name type="scientific">Clostridium botulinum (strain Eklund 17B / Type B)</name>
    <dbReference type="NCBI Taxonomy" id="935198"/>
    <lineage>
        <taxon>Bacteria</taxon>
        <taxon>Bacillati</taxon>
        <taxon>Bacillota</taxon>
        <taxon>Clostridia</taxon>
        <taxon>Eubacteriales</taxon>
        <taxon>Clostridiaceae</taxon>
        <taxon>Clostridium</taxon>
    </lineage>
</organism>
<protein>
    <recommendedName>
        <fullName evidence="1">Small ribosomal subunit protein uS13</fullName>
    </recommendedName>
    <alternativeName>
        <fullName evidence="3">30S ribosomal protein S13</fullName>
    </alternativeName>
</protein>
<accession>B2TIK1</accession>
<dbReference type="EMBL" id="CP001056">
    <property type="protein sequence ID" value="ACD22953.1"/>
    <property type="molecule type" value="Genomic_DNA"/>
</dbReference>
<dbReference type="SMR" id="B2TIK1"/>
<dbReference type="KEGG" id="cbk:CLL_A0264"/>
<dbReference type="PATRIC" id="fig|935198.13.peg.239"/>
<dbReference type="HOGENOM" id="CLU_103849_1_2_9"/>
<dbReference type="Proteomes" id="UP000001195">
    <property type="component" value="Chromosome"/>
</dbReference>
<dbReference type="GO" id="GO:0005829">
    <property type="term" value="C:cytosol"/>
    <property type="evidence" value="ECO:0007669"/>
    <property type="project" value="TreeGrafter"/>
</dbReference>
<dbReference type="GO" id="GO:0015935">
    <property type="term" value="C:small ribosomal subunit"/>
    <property type="evidence" value="ECO:0007669"/>
    <property type="project" value="TreeGrafter"/>
</dbReference>
<dbReference type="GO" id="GO:0019843">
    <property type="term" value="F:rRNA binding"/>
    <property type="evidence" value="ECO:0007669"/>
    <property type="project" value="UniProtKB-UniRule"/>
</dbReference>
<dbReference type="GO" id="GO:0003735">
    <property type="term" value="F:structural constituent of ribosome"/>
    <property type="evidence" value="ECO:0007669"/>
    <property type="project" value="InterPro"/>
</dbReference>
<dbReference type="GO" id="GO:0000049">
    <property type="term" value="F:tRNA binding"/>
    <property type="evidence" value="ECO:0007669"/>
    <property type="project" value="UniProtKB-UniRule"/>
</dbReference>
<dbReference type="GO" id="GO:0006412">
    <property type="term" value="P:translation"/>
    <property type="evidence" value="ECO:0007669"/>
    <property type="project" value="UniProtKB-UniRule"/>
</dbReference>
<dbReference type="FunFam" id="1.10.8.50:FF:000001">
    <property type="entry name" value="30S ribosomal protein S13"/>
    <property type="match status" value="1"/>
</dbReference>
<dbReference type="FunFam" id="4.10.910.10:FF:000001">
    <property type="entry name" value="30S ribosomal protein S13"/>
    <property type="match status" value="1"/>
</dbReference>
<dbReference type="Gene3D" id="1.10.8.50">
    <property type="match status" value="1"/>
</dbReference>
<dbReference type="Gene3D" id="4.10.910.10">
    <property type="entry name" value="30s ribosomal protein s13, domain 2"/>
    <property type="match status" value="1"/>
</dbReference>
<dbReference type="HAMAP" id="MF_01315">
    <property type="entry name" value="Ribosomal_uS13"/>
    <property type="match status" value="1"/>
</dbReference>
<dbReference type="InterPro" id="IPR027437">
    <property type="entry name" value="Rbsml_uS13_C"/>
</dbReference>
<dbReference type="InterPro" id="IPR001892">
    <property type="entry name" value="Ribosomal_uS13"/>
</dbReference>
<dbReference type="InterPro" id="IPR010979">
    <property type="entry name" value="Ribosomal_uS13-like_H2TH"/>
</dbReference>
<dbReference type="InterPro" id="IPR019980">
    <property type="entry name" value="Ribosomal_uS13_bac-type"/>
</dbReference>
<dbReference type="InterPro" id="IPR018269">
    <property type="entry name" value="Ribosomal_uS13_CS"/>
</dbReference>
<dbReference type="NCBIfam" id="TIGR03631">
    <property type="entry name" value="uS13_bact"/>
    <property type="match status" value="1"/>
</dbReference>
<dbReference type="PANTHER" id="PTHR10871">
    <property type="entry name" value="30S RIBOSOMAL PROTEIN S13/40S RIBOSOMAL PROTEIN S18"/>
    <property type="match status" value="1"/>
</dbReference>
<dbReference type="PANTHER" id="PTHR10871:SF1">
    <property type="entry name" value="SMALL RIBOSOMAL SUBUNIT PROTEIN US13M"/>
    <property type="match status" value="1"/>
</dbReference>
<dbReference type="Pfam" id="PF00416">
    <property type="entry name" value="Ribosomal_S13"/>
    <property type="match status" value="1"/>
</dbReference>
<dbReference type="PIRSF" id="PIRSF002134">
    <property type="entry name" value="Ribosomal_S13"/>
    <property type="match status" value="1"/>
</dbReference>
<dbReference type="SUPFAM" id="SSF46946">
    <property type="entry name" value="S13-like H2TH domain"/>
    <property type="match status" value="1"/>
</dbReference>
<dbReference type="PROSITE" id="PS00646">
    <property type="entry name" value="RIBOSOMAL_S13_1"/>
    <property type="match status" value="1"/>
</dbReference>
<dbReference type="PROSITE" id="PS50159">
    <property type="entry name" value="RIBOSOMAL_S13_2"/>
    <property type="match status" value="1"/>
</dbReference>
<comment type="function">
    <text evidence="1">Located at the top of the head of the 30S subunit, it contacts several helices of the 16S rRNA. In the 70S ribosome it contacts the 23S rRNA (bridge B1a) and protein L5 of the 50S subunit (bridge B1b), connecting the 2 subunits; these bridges are implicated in subunit movement. Contacts the tRNAs in the A and P-sites.</text>
</comment>
<comment type="subunit">
    <text evidence="1">Part of the 30S ribosomal subunit. Forms a loose heterodimer with protein S19. Forms two bridges to the 50S subunit in the 70S ribosome.</text>
</comment>
<comment type="similarity">
    <text evidence="1">Belongs to the universal ribosomal protein uS13 family.</text>
</comment>
<proteinExistence type="inferred from homology"/>
<gene>
    <name evidence="1" type="primary">rpsM</name>
    <name type="ordered locus">CLL_A0264</name>
</gene>
<name>RS13_CLOBB</name>
<sequence>MARIAGVDLPREKRVEIALTYIYGIGLSTSQKILSTTGISPDARVKDLSEDEVNEIRTYINKNLMVEGDLRRDVALNIKRLVEIGSYRGIRHRRGLPVRGQKTKTNARTRKGPKKTMANKKK</sequence>
<evidence type="ECO:0000255" key="1">
    <source>
        <dbReference type="HAMAP-Rule" id="MF_01315"/>
    </source>
</evidence>
<evidence type="ECO:0000256" key="2">
    <source>
        <dbReference type="SAM" id="MobiDB-lite"/>
    </source>
</evidence>
<evidence type="ECO:0000305" key="3"/>
<feature type="chain" id="PRO_1000141243" description="Small ribosomal subunit protein uS13">
    <location>
        <begin position="1"/>
        <end position="122"/>
    </location>
</feature>
<feature type="region of interest" description="Disordered" evidence="2">
    <location>
        <begin position="93"/>
        <end position="122"/>
    </location>
</feature>
<reference key="1">
    <citation type="submission" date="2008-04" db="EMBL/GenBank/DDBJ databases">
        <title>Complete sequence of Clostridium botulinum strain Eklund.</title>
        <authorList>
            <person name="Brinkac L.M."/>
            <person name="Brown J.L."/>
            <person name="Bruce D."/>
            <person name="Detter C."/>
            <person name="Munk C."/>
            <person name="Smith L.A."/>
            <person name="Smith T.J."/>
            <person name="Sutton G."/>
            <person name="Brettin T.S."/>
        </authorList>
    </citation>
    <scope>NUCLEOTIDE SEQUENCE [LARGE SCALE GENOMIC DNA]</scope>
    <source>
        <strain>Eklund 17B / Type B</strain>
    </source>
</reference>